<organism>
    <name type="scientific">Paracoccidioides brasiliensis</name>
    <dbReference type="NCBI Taxonomy" id="121759"/>
    <lineage>
        <taxon>Eukaryota</taxon>
        <taxon>Fungi</taxon>
        <taxon>Dikarya</taxon>
        <taxon>Ascomycota</taxon>
        <taxon>Pezizomycotina</taxon>
        <taxon>Eurotiomycetes</taxon>
        <taxon>Eurotiomycetidae</taxon>
        <taxon>Onygenales</taxon>
        <taxon>Ajellomycetaceae</taxon>
        <taxon>Paracoccidioides</taxon>
    </lineage>
</organism>
<feature type="chain" id="PRO_0000413266" description="Glutamyl-tRNA(Gln) amidotransferase subunit B, mitochondrial">
    <location>
        <begin position="1"/>
        <end position="603"/>
    </location>
</feature>
<feature type="region of interest" description="Disordered" evidence="2">
    <location>
        <begin position="38"/>
        <end position="61"/>
    </location>
</feature>
<feature type="region of interest" description="Disordered" evidence="2">
    <location>
        <begin position="72"/>
        <end position="91"/>
    </location>
</feature>
<feature type="compositionally biased region" description="Polar residues" evidence="2">
    <location>
        <begin position="42"/>
        <end position="58"/>
    </location>
</feature>
<name>GATB_PARBR</name>
<evidence type="ECO:0000255" key="1">
    <source>
        <dbReference type="HAMAP-Rule" id="MF_03147"/>
    </source>
</evidence>
<evidence type="ECO:0000256" key="2">
    <source>
        <dbReference type="SAM" id="MobiDB-lite"/>
    </source>
</evidence>
<protein>
    <recommendedName>
        <fullName evidence="1">Glutamyl-tRNA(Gln) amidotransferase subunit B, mitochondrial</fullName>
        <shortName evidence="1">Glu-AdT subunit B</shortName>
        <ecNumber evidence="1">6.3.5.-</ecNumber>
    </recommendedName>
</protein>
<sequence length="603" mass="66702">MIRQCLSRRAACPCYRIAAGGTELTGCLYPQSSRISRRGRDWSSTSRRAIDTQTSGASNGADYVPLRKQLKEQAREGRAATRKGEVSPPEHEDWELTVGIEIHAQLDTDTKLFSRASAAIDDVPNSNVALFDIALPGSQPLFQPATLIPALRAAIALNCDVQRVSRFDRKHYFYQDQPAGYQITQYYEPYAKNGSIWLGPHDGIAKEDGVGVKIGIKQIQLEQDTAKSQELPSSTYLLDFNRVSRPLIEIITLPQIHSPATAAACVRKIQTILQSVGAVTTGMEMGGLRADVNVSVRKRSEGVGDHQYHGITGLGQRTEIKNLSSFKAVENAIIAERDRQIAVLRAGGAIEGETRGWTLGSTETRKLRGKEGEVDYRYMPDPDLGPVIIGIDVFFELKAKLPVLPDALLQSLVQDPKYGLSTDDAKALIELDDGDRLDYYKDAVDILITLQKDLSDDFSGGGKVVGNWVLHELGGLLTKSNLHWDSERVPAQSLAEIINLLSRNKITGSTAKSLLAMVFDGDKRSISQIVEDENLLLQSLSREEYIALAEEVMRQNPKMVMEICEKRQLGKIGWLVGQIKQIGDRNRVEAQKAEEILRELILK</sequence>
<comment type="function">
    <text evidence="1">Allows the formation of correctly charged Gln-tRNA(Gln) through the transamidation of misacylated Glu-tRNA(Gln) in the mitochondria. The reaction takes place in the presence of glutamine and ATP through an activated gamma-phospho-Glu-tRNA(Gln).</text>
</comment>
<comment type="catalytic activity">
    <reaction evidence="1">
        <text>L-glutamyl-tRNA(Gln) + L-glutamine + ATP + H2O = L-glutaminyl-tRNA(Gln) + L-glutamate + ADP + phosphate + H(+)</text>
        <dbReference type="Rhea" id="RHEA:17521"/>
        <dbReference type="Rhea" id="RHEA-COMP:9681"/>
        <dbReference type="Rhea" id="RHEA-COMP:9684"/>
        <dbReference type="ChEBI" id="CHEBI:15377"/>
        <dbReference type="ChEBI" id="CHEBI:15378"/>
        <dbReference type="ChEBI" id="CHEBI:29985"/>
        <dbReference type="ChEBI" id="CHEBI:30616"/>
        <dbReference type="ChEBI" id="CHEBI:43474"/>
        <dbReference type="ChEBI" id="CHEBI:58359"/>
        <dbReference type="ChEBI" id="CHEBI:78520"/>
        <dbReference type="ChEBI" id="CHEBI:78521"/>
        <dbReference type="ChEBI" id="CHEBI:456216"/>
    </reaction>
</comment>
<comment type="subunit">
    <text evidence="1">Subunit of the heterotrimeric GatCAB amidotransferase (AdT) complex, composed of A, B and C subunits.</text>
</comment>
<comment type="subcellular location">
    <subcellularLocation>
        <location evidence="1">Mitochondrion</location>
    </subcellularLocation>
</comment>
<comment type="miscellaneous">
    <text evidence="1">This protein may be expected to contain an N-terminal transit peptide but none has been predicted.</text>
</comment>
<comment type="similarity">
    <text evidence="1">Belongs to the GatB/GatE family. GatB subfamily.</text>
</comment>
<keyword id="KW-0067">ATP-binding</keyword>
<keyword id="KW-0436">Ligase</keyword>
<keyword id="KW-0496">Mitochondrion</keyword>
<keyword id="KW-0547">Nucleotide-binding</keyword>
<keyword id="KW-0648">Protein biosynthesis</keyword>
<reference key="1">
    <citation type="submission" date="2006-02" db="EMBL/GenBank/DDBJ databases">
        <title>Putative cytochrome oxidase assembly factor PET112.</title>
        <authorList>
            <person name="Bandeira S.C.B."/>
            <person name="Nobrega M.P."/>
        </authorList>
    </citation>
    <scope>NUCLEOTIDE SEQUENCE [MRNA]</scope>
</reference>
<dbReference type="EC" id="6.3.5.-" evidence="1"/>
<dbReference type="EMBL" id="DQ402183">
    <property type="protein sequence ID" value="ABD64680.1"/>
    <property type="molecule type" value="mRNA"/>
</dbReference>
<dbReference type="SMR" id="Q208S2"/>
<dbReference type="VEuPathDB" id="FungiDB:PABG_02234"/>
<dbReference type="VEuPathDB" id="FungiDB:PADG_00638"/>
<dbReference type="GO" id="GO:0030956">
    <property type="term" value="C:glutamyl-tRNA(Gln) amidotransferase complex"/>
    <property type="evidence" value="ECO:0007669"/>
    <property type="project" value="UniProtKB-UniRule"/>
</dbReference>
<dbReference type="GO" id="GO:0005739">
    <property type="term" value="C:mitochondrion"/>
    <property type="evidence" value="ECO:0007669"/>
    <property type="project" value="UniProtKB-SubCell"/>
</dbReference>
<dbReference type="GO" id="GO:0005524">
    <property type="term" value="F:ATP binding"/>
    <property type="evidence" value="ECO:0007669"/>
    <property type="project" value="UniProtKB-KW"/>
</dbReference>
<dbReference type="GO" id="GO:0050567">
    <property type="term" value="F:glutaminyl-tRNA synthase (glutamine-hydrolyzing) activity"/>
    <property type="evidence" value="ECO:0007669"/>
    <property type="project" value="UniProtKB-UniRule"/>
</dbReference>
<dbReference type="GO" id="GO:0070681">
    <property type="term" value="P:glutaminyl-tRNAGln biosynthesis via transamidation"/>
    <property type="evidence" value="ECO:0007669"/>
    <property type="project" value="UniProtKB-UniRule"/>
</dbReference>
<dbReference type="GO" id="GO:0032543">
    <property type="term" value="P:mitochondrial translation"/>
    <property type="evidence" value="ECO:0007669"/>
    <property type="project" value="UniProtKB-UniRule"/>
</dbReference>
<dbReference type="HAMAP" id="MF_00121">
    <property type="entry name" value="GatB"/>
    <property type="match status" value="1"/>
</dbReference>
<dbReference type="InterPro" id="IPR017959">
    <property type="entry name" value="Asn/Gln-tRNA_amidoTrfase_suB/E"/>
</dbReference>
<dbReference type="InterPro" id="IPR006075">
    <property type="entry name" value="Asn/Gln-tRNA_Trfase_suB/E_cat"/>
</dbReference>
<dbReference type="InterPro" id="IPR018027">
    <property type="entry name" value="Asn/Gln_amidotransferase"/>
</dbReference>
<dbReference type="InterPro" id="IPR003789">
    <property type="entry name" value="Asn/Gln_tRNA_amidoTrase-B-like"/>
</dbReference>
<dbReference type="InterPro" id="IPR004413">
    <property type="entry name" value="GatB"/>
</dbReference>
<dbReference type="InterPro" id="IPR017958">
    <property type="entry name" value="Gln-tRNA_amidoTrfase_suB_CS"/>
</dbReference>
<dbReference type="InterPro" id="IPR014746">
    <property type="entry name" value="Gln_synth/guanido_kin_cat_dom"/>
</dbReference>
<dbReference type="NCBIfam" id="TIGR00133">
    <property type="entry name" value="gatB"/>
    <property type="match status" value="1"/>
</dbReference>
<dbReference type="NCBIfam" id="NF004012">
    <property type="entry name" value="PRK05477.1-2"/>
    <property type="match status" value="1"/>
</dbReference>
<dbReference type="PANTHER" id="PTHR11659">
    <property type="entry name" value="GLUTAMYL-TRNA GLN AMIDOTRANSFERASE SUBUNIT B MITOCHONDRIAL AND PROKARYOTIC PET112-RELATED"/>
    <property type="match status" value="1"/>
</dbReference>
<dbReference type="PANTHER" id="PTHR11659:SF0">
    <property type="entry name" value="GLUTAMYL-TRNA(GLN) AMIDOTRANSFERASE SUBUNIT B, MITOCHONDRIAL"/>
    <property type="match status" value="1"/>
</dbReference>
<dbReference type="Pfam" id="PF02934">
    <property type="entry name" value="GatB_N"/>
    <property type="match status" value="1"/>
</dbReference>
<dbReference type="Pfam" id="PF02637">
    <property type="entry name" value="GatB_Yqey"/>
    <property type="match status" value="1"/>
</dbReference>
<dbReference type="SMART" id="SM00845">
    <property type="entry name" value="GatB_Yqey"/>
    <property type="match status" value="1"/>
</dbReference>
<dbReference type="SUPFAM" id="SSF89095">
    <property type="entry name" value="GatB/YqeY motif"/>
    <property type="match status" value="1"/>
</dbReference>
<dbReference type="SUPFAM" id="SSF55931">
    <property type="entry name" value="Glutamine synthetase/guanido kinase"/>
    <property type="match status" value="1"/>
</dbReference>
<dbReference type="PROSITE" id="PS01234">
    <property type="entry name" value="GATB"/>
    <property type="match status" value="1"/>
</dbReference>
<proteinExistence type="evidence at transcript level"/>
<accession>Q208S2</accession>